<gene>
    <name evidence="1" type="primary">malT</name>
    <name type="ordered locus">KPN78578_37510</name>
    <name type="ORF">KPN_03788</name>
</gene>
<comment type="function">
    <text evidence="1">Positively regulates the transcription of the maltose regulon whose gene products are responsible for uptake and catabolism of malto-oligosaccharides. Specifically binds to the promoter region of its target genes, recognizing a short DNA motif called the MalT box.</text>
</comment>
<comment type="activity regulation">
    <text evidence="1">Activated by ATP and maltotriose, which are both required for DNA binding.</text>
</comment>
<comment type="subunit">
    <text evidence="1">Monomer in solution. Oligomerizes to an active state in the presence of the positive effectors ATP and maltotriose.</text>
</comment>
<comment type="similarity">
    <text evidence="1">Belongs to the MalT family.</text>
</comment>
<name>MALT_KLEP7</name>
<keyword id="KW-0010">Activator</keyword>
<keyword id="KW-0067">ATP-binding</keyword>
<keyword id="KW-0119">Carbohydrate metabolism</keyword>
<keyword id="KW-0238">DNA-binding</keyword>
<keyword id="KW-0547">Nucleotide-binding</keyword>
<keyword id="KW-0804">Transcription</keyword>
<keyword id="KW-0805">Transcription regulation</keyword>
<accession>A6TF41</accession>
<feature type="chain" id="PRO_1000085773" description="HTH-type transcriptional regulator MalT">
    <location>
        <begin position="1"/>
        <end position="901"/>
    </location>
</feature>
<feature type="domain" description="HTH luxR-type" evidence="1">
    <location>
        <begin position="829"/>
        <end position="894"/>
    </location>
</feature>
<feature type="DNA-binding region" description="H-T-H motif" evidence="1">
    <location>
        <begin position="853"/>
        <end position="872"/>
    </location>
</feature>
<feature type="binding site" evidence="1">
    <location>
        <begin position="39"/>
        <end position="46"/>
    </location>
    <ligand>
        <name>ATP</name>
        <dbReference type="ChEBI" id="CHEBI:30616"/>
    </ligand>
</feature>
<evidence type="ECO:0000255" key="1">
    <source>
        <dbReference type="HAMAP-Rule" id="MF_01247"/>
    </source>
</evidence>
<sequence>MLIPSKLSRPVRLEHTVVRERLLAKLSGANNYRLVLITSPAGYGKTTLISQWAAGKNDLGWFSLDEGDNQQERFASYLIAAIQQATGNHCAASEAMVQKRQYASLSSLFAQLFIELADWQRPLYLVIDDYHLINNPVIHDAMRFFLRHQPENMTLVVLSRNLPQLGIANLRVRDQLLEIGSQQLAFTHQEAKQFFDCRLTSPIEADDSSRLCDDVAGWATALQLIALSARQNNSSAQHSARRFAGINASHLSDYLVDEVLDNVDARTRNFLLKSSLLRSMNDALIVRVTGEENGQMQLEEIERQGLFLQRMDDSGEWFRYHPLFGSFLRQRCQWELAVELPEIHRAAAESWMAQGFPSEAIHHALAAGDAKMLRDILLNHAWGMFNHSELGLLEQSLAALPWSNLLENPRLILLQAWLMQSQHRYSEVNTLLARAEQEMSVEMDTAMHGDFNALRAQVAINDGDQDEAERLSMVALEELPLANYYSRIVATSVHGEVLHCKGKLTKSLAVMQQTEQMARRHDVWHYALWSIIQQSEILFAQGFLQAAWESQEKAFQLVREQHLEQLPMHEFLLRIRSQLLWAWARLDEAEACARQGMDVLSTYQPQQQLQCLALMVQCSLARGDLDNARSHLNRLENLLGNGHYHSDWVSNADKVRVIYWQMTGDKTAAANWLRQTPKPEFANNHFLQSQWRNIARAQILLGDFEPAEMVLEELNENARSLRLMSDLNRNLLLLNQLYWQSGRKSEAQKALLEALTLANRTGFINHFVIEGEAMAQQLRQLIQLNTLPELEQHRAQRILRDINQHHRHKFAHFDEGFVERLLNHPEVPELIRTSPLTQREWQVLGLIYSGYSNEQIAGELDVAATTIKTHIRNLYQKLGVAHRQDAVQHAQQLLKMMGYGV</sequence>
<reference key="1">
    <citation type="submission" date="2006-09" db="EMBL/GenBank/DDBJ databases">
        <authorList>
            <consortium name="The Klebsiella pneumonia Genome Sequencing Project"/>
            <person name="McClelland M."/>
            <person name="Sanderson E.K."/>
            <person name="Spieth J."/>
            <person name="Clifton W.S."/>
            <person name="Latreille P."/>
            <person name="Sabo A."/>
            <person name="Pepin K."/>
            <person name="Bhonagiri V."/>
            <person name="Porwollik S."/>
            <person name="Ali J."/>
            <person name="Wilson R.K."/>
        </authorList>
    </citation>
    <scope>NUCLEOTIDE SEQUENCE [LARGE SCALE GENOMIC DNA]</scope>
    <source>
        <strain>ATCC 700721 / MGH 78578</strain>
    </source>
</reference>
<dbReference type="EMBL" id="CP000647">
    <property type="protein sequence ID" value="ABR79175.1"/>
    <property type="molecule type" value="Genomic_DNA"/>
</dbReference>
<dbReference type="RefSeq" id="WP_015959097.1">
    <property type="nucleotide sequence ID" value="NC_009648.1"/>
</dbReference>
<dbReference type="SMR" id="A6TF41"/>
<dbReference type="STRING" id="272620.KPN_03788"/>
<dbReference type="jPOST" id="A6TF41"/>
<dbReference type="PaxDb" id="272620-KPN_03788"/>
<dbReference type="EnsemblBacteria" id="ABR79175">
    <property type="protein sequence ID" value="ABR79175"/>
    <property type="gene ID" value="KPN_03788"/>
</dbReference>
<dbReference type="KEGG" id="kpn:KPN_03788"/>
<dbReference type="HOGENOM" id="CLU_006325_3_0_6"/>
<dbReference type="Proteomes" id="UP000000265">
    <property type="component" value="Chromosome"/>
</dbReference>
<dbReference type="GO" id="GO:0005524">
    <property type="term" value="F:ATP binding"/>
    <property type="evidence" value="ECO:0007669"/>
    <property type="project" value="UniProtKB-UniRule"/>
</dbReference>
<dbReference type="GO" id="GO:0003677">
    <property type="term" value="F:DNA binding"/>
    <property type="evidence" value="ECO:0007669"/>
    <property type="project" value="UniProtKB-KW"/>
</dbReference>
<dbReference type="GO" id="GO:0003700">
    <property type="term" value="F:DNA-binding transcription factor activity"/>
    <property type="evidence" value="ECO:0007669"/>
    <property type="project" value="UniProtKB-UniRule"/>
</dbReference>
<dbReference type="GO" id="GO:0045913">
    <property type="term" value="P:positive regulation of carbohydrate metabolic process"/>
    <property type="evidence" value="ECO:0007669"/>
    <property type="project" value="UniProtKB-UniRule"/>
</dbReference>
<dbReference type="GO" id="GO:0045893">
    <property type="term" value="P:positive regulation of DNA-templated transcription"/>
    <property type="evidence" value="ECO:0007669"/>
    <property type="project" value="UniProtKB-UniRule"/>
</dbReference>
<dbReference type="CDD" id="cd06170">
    <property type="entry name" value="LuxR_C_like"/>
    <property type="match status" value="1"/>
</dbReference>
<dbReference type="FunFam" id="1.10.10.10:FF:000115">
    <property type="entry name" value="HTH-type transcriptional regulator MalT"/>
    <property type="match status" value="1"/>
</dbReference>
<dbReference type="Gene3D" id="3.40.50.300">
    <property type="entry name" value="P-loop containing nucleotide triphosphate hydrolases"/>
    <property type="match status" value="1"/>
</dbReference>
<dbReference type="Gene3D" id="1.25.40.10">
    <property type="entry name" value="Tetratricopeptide repeat domain"/>
    <property type="match status" value="1"/>
</dbReference>
<dbReference type="Gene3D" id="1.10.10.10">
    <property type="entry name" value="Winged helix-like DNA-binding domain superfamily/Winged helix DNA-binding domain"/>
    <property type="match status" value="1"/>
</dbReference>
<dbReference type="HAMAP" id="MF_01247">
    <property type="entry name" value="HTH_type_MalT"/>
    <property type="match status" value="1"/>
</dbReference>
<dbReference type="InterPro" id="IPR027417">
    <property type="entry name" value="P-loop_NTPase"/>
</dbReference>
<dbReference type="InterPro" id="IPR016032">
    <property type="entry name" value="Sig_transdc_resp-reg_C-effctor"/>
</dbReference>
<dbReference type="InterPro" id="IPR011990">
    <property type="entry name" value="TPR-like_helical_dom_sf"/>
</dbReference>
<dbReference type="InterPro" id="IPR041617">
    <property type="entry name" value="TPR_MalT"/>
</dbReference>
<dbReference type="InterPro" id="IPR023768">
    <property type="entry name" value="Tscrpt_reg_HTH_MalT"/>
</dbReference>
<dbReference type="InterPro" id="IPR000792">
    <property type="entry name" value="Tscrpt_reg_LuxR_C"/>
</dbReference>
<dbReference type="InterPro" id="IPR036388">
    <property type="entry name" value="WH-like_DNA-bd_sf"/>
</dbReference>
<dbReference type="NCBIfam" id="NF003420">
    <property type="entry name" value="PRK04841.1"/>
    <property type="match status" value="1"/>
</dbReference>
<dbReference type="PANTHER" id="PTHR44688">
    <property type="entry name" value="DNA-BINDING TRANSCRIPTIONAL ACTIVATOR DEVR_DOSR"/>
    <property type="match status" value="1"/>
</dbReference>
<dbReference type="PANTHER" id="PTHR44688:SF16">
    <property type="entry name" value="DNA-BINDING TRANSCRIPTIONAL ACTIVATOR DEVR_DOSR"/>
    <property type="match status" value="1"/>
</dbReference>
<dbReference type="Pfam" id="PF00196">
    <property type="entry name" value="GerE"/>
    <property type="match status" value="1"/>
</dbReference>
<dbReference type="Pfam" id="PF17874">
    <property type="entry name" value="TPR_MalT"/>
    <property type="match status" value="1"/>
</dbReference>
<dbReference type="PRINTS" id="PR00038">
    <property type="entry name" value="HTHLUXR"/>
</dbReference>
<dbReference type="SMART" id="SM00421">
    <property type="entry name" value="HTH_LUXR"/>
    <property type="match status" value="1"/>
</dbReference>
<dbReference type="SUPFAM" id="SSF46894">
    <property type="entry name" value="C-terminal effector domain of the bipartite response regulators"/>
    <property type="match status" value="1"/>
</dbReference>
<dbReference type="SUPFAM" id="SSF52540">
    <property type="entry name" value="P-loop containing nucleoside triphosphate hydrolases"/>
    <property type="match status" value="1"/>
</dbReference>
<dbReference type="SUPFAM" id="SSF48452">
    <property type="entry name" value="TPR-like"/>
    <property type="match status" value="1"/>
</dbReference>
<dbReference type="PROSITE" id="PS00622">
    <property type="entry name" value="HTH_LUXR_1"/>
    <property type="match status" value="1"/>
</dbReference>
<dbReference type="PROSITE" id="PS50043">
    <property type="entry name" value="HTH_LUXR_2"/>
    <property type="match status" value="1"/>
</dbReference>
<protein>
    <recommendedName>
        <fullName evidence="1">HTH-type transcriptional regulator MalT</fullName>
    </recommendedName>
    <alternativeName>
        <fullName evidence="1">ATP-dependent transcriptional activator MalT</fullName>
    </alternativeName>
</protein>
<proteinExistence type="inferred from homology"/>
<organism>
    <name type="scientific">Klebsiella pneumoniae subsp. pneumoniae (strain ATCC 700721 / MGH 78578)</name>
    <dbReference type="NCBI Taxonomy" id="272620"/>
    <lineage>
        <taxon>Bacteria</taxon>
        <taxon>Pseudomonadati</taxon>
        <taxon>Pseudomonadota</taxon>
        <taxon>Gammaproteobacteria</taxon>
        <taxon>Enterobacterales</taxon>
        <taxon>Enterobacteriaceae</taxon>
        <taxon>Klebsiella/Raoultella group</taxon>
        <taxon>Klebsiella</taxon>
        <taxon>Klebsiella pneumoniae complex</taxon>
    </lineage>
</organism>